<keyword id="KW-0997">Cell inner membrane</keyword>
<keyword id="KW-1003">Cell membrane</keyword>
<keyword id="KW-0460">Magnesium</keyword>
<keyword id="KW-0472">Membrane</keyword>
<keyword id="KW-1185">Reference proteome</keyword>
<keyword id="KW-0808">Transferase</keyword>
<keyword id="KW-0812">Transmembrane</keyword>
<keyword id="KW-1133">Transmembrane helix</keyword>
<keyword id="KW-0831">Ubiquinone biosynthesis</keyword>
<sequence>MLARFPLYLRLIRMDKPIGSLLLLWPTLNALWIASDGHPAPSLVVIFALGTLLMRSAGCAINDYADRDFDRHVKRTAERPLTSGKIRAWEAIAIAVGLALVSFLLILPLNGLTKELSVVAVFVAATYPFMKRFFAIPQAYLGIAFGFGIPMAFAAVQDTVPMIAWAMLAANVFWSVAYDTAYAMVDRDDDLKIGMRTSAITFGRHDVLAIMLCYAAMLGIYVWLGAALHFGWPYWAGWAAAAGCSIYHYTLIKDRERMACFAAFRHNNWLGGVLFAGIAAHYALAVR</sequence>
<evidence type="ECO:0000255" key="1">
    <source>
        <dbReference type="HAMAP-Rule" id="MF_01635"/>
    </source>
</evidence>
<evidence type="ECO:0000305" key="2"/>
<protein>
    <recommendedName>
        <fullName evidence="1">4-hydroxybenzoate octaprenyltransferase</fullName>
        <ecNumber evidence="1">2.5.1.39</ecNumber>
    </recommendedName>
    <alternativeName>
        <fullName evidence="1">4-HB polyprenyltransferase</fullName>
    </alternativeName>
</protein>
<organism>
    <name type="scientific">Burkholderia mallei (strain ATCC 23344)</name>
    <dbReference type="NCBI Taxonomy" id="243160"/>
    <lineage>
        <taxon>Bacteria</taxon>
        <taxon>Pseudomonadati</taxon>
        <taxon>Pseudomonadota</taxon>
        <taxon>Betaproteobacteria</taxon>
        <taxon>Burkholderiales</taxon>
        <taxon>Burkholderiaceae</taxon>
        <taxon>Burkholderia</taxon>
        <taxon>pseudomallei group</taxon>
    </lineage>
</organism>
<dbReference type="EC" id="2.5.1.39" evidence="1"/>
<dbReference type="EMBL" id="CP000010">
    <property type="protein sequence ID" value="AAU50177.1"/>
    <property type="status" value="ALT_INIT"/>
    <property type="molecule type" value="Genomic_DNA"/>
</dbReference>
<dbReference type="RefSeq" id="WP_004194359.1">
    <property type="nucleotide sequence ID" value="NC_006348.1"/>
</dbReference>
<dbReference type="RefSeq" id="YP_103951.1">
    <property type="nucleotide sequence ID" value="NC_006348.1"/>
</dbReference>
<dbReference type="SMR" id="Q62H69"/>
<dbReference type="GeneID" id="92980092"/>
<dbReference type="KEGG" id="bma:BMA2396"/>
<dbReference type="PATRIC" id="fig|243160.12.peg.2471"/>
<dbReference type="eggNOG" id="COG0382">
    <property type="taxonomic scope" value="Bacteria"/>
</dbReference>
<dbReference type="HOGENOM" id="CLU_034879_1_0_4"/>
<dbReference type="UniPathway" id="UPA00232"/>
<dbReference type="Proteomes" id="UP000006693">
    <property type="component" value="Chromosome 1"/>
</dbReference>
<dbReference type="GO" id="GO:0005886">
    <property type="term" value="C:plasma membrane"/>
    <property type="evidence" value="ECO:0007669"/>
    <property type="project" value="UniProtKB-SubCell"/>
</dbReference>
<dbReference type="GO" id="GO:0008412">
    <property type="term" value="F:4-hydroxybenzoate polyprenyltransferase activity"/>
    <property type="evidence" value="ECO:0007669"/>
    <property type="project" value="UniProtKB-UniRule"/>
</dbReference>
<dbReference type="GO" id="GO:0006744">
    <property type="term" value="P:ubiquinone biosynthetic process"/>
    <property type="evidence" value="ECO:0007669"/>
    <property type="project" value="UniProtKB-UniRule"/>
</dbReference>
<dbReference type="CDD" id="cd13959">
    <property type="entry name" value="PT_UbiA_COQ2"/>
    <property type="match status" value="1"/>
</dbReference>
<dbReference type="FunFam" id="1.10.357.140:FF:000002">
    <property type="entry name" value="4-hydroxybenzoate octaprenyltransferase"/>
    <property type="match status" value="1"/>
</dbReference>
<dbReference type="FunFam" id="1.20.120.1780:FF:000001">
    <property type="entry name" value="4-hydroxybenzoate octaprenyltransferase"/>
    <property type="match status" value="1"/>
</dbReference>
<dbReference type="Gene3D" id="1.10.357.140">
    <property type="entry name" value="UbiA prenyltransferase"/>
    <property type="match status" value="1"/>
</dbReference>
<dbReference type="Gene3D" id="1.20.120.1780">
    <property type="entry name" value="UbiA prenyltransferase"/>
    <property type="match status" value="1"/>
</dbReference>
<dbReference type="HAMAP" id="MF_01635">
    <property type="entry name" value="UbiA"/>
    <property type="match status" value="1"/>
</dbReference>
<dbReference type="InterPro" id="IPR006370">
    <property type="entry name" value="HB_polyprenyltransferase-like"/>
</dbReference>
<dbReference type="InterPro" id="IPR039653">
    <property type="entry name" value="Prenyltransferase"/>
</dbReference>
<dbReference type="InterPro" id="IPR000537">
    <property type="entry name" value="UbiA_prenyltransferase"/>
</dbReference>
<dbReference type="InterPro" id="IPR030470">
    <property type="entry name" value="UbiA_prenylTrfase_CS"/>
</dbReference>
<dbReference type="InterPro" id="IPR044878">
    <property type="entry name" value="UbiA_sf"/>
</dbReference>
<dbReference type="NCBIfam" id="TIGR01474">
    <property type="entry name" value="ubiA_proteo"/>
    <property type="match status" value="1"/>
</dbReference>
<dbReference type="PANTHER" id="PTHR11048:SF28">
    <property type="entry name" value="4-HYDROXYBENZOATE POLYPRENYLTRANSFERASE, MITOCHONDRIAL"/>
    <property type="match status" value="1"/>
</dbReference>
<dbReference type="PANTHER" id="PTHR11048">
    <property type="entry name" value="PRENYLTRANSFERASES"/>
    <property type="match status" value="1"/>
</dbReference>
<dbReference type="Pfam" id="PF01040">
    <property type="entry name" value="UbiA"/>
    <property type="match status" value="1"/>
</dbReference>
<dbReference type="PROSITE" id="PS00943">
    <property type="entry name" value="UBIA"/>
    <property type="match status" value="1"/>
</dbReference>
<feature type="chain" id="PRO_0000262782" description="4-hydroxybenzoate octaprenyltransferase">
    <location>
        <begin position="1"/>
        <end position="287"/>
    </location>
</feature>
<feature type="transmembrane region" description="Helical" evidence="1">
    <location>
        <begin position="30"/>
        <end position="50"/>
    </location>
</feature>
<feature type="transmembrane region" description="Helical" evidence="1">
    <location>
        <begin position="92"/>
        <end position="112"/>
    </location>
</feature>
<feature type="transmembrane region" description="Helical" evidence="1">
    <location>
        <begin position="133"/>
        <end position="153"/>
    </location>
</feature>
<feature type="transmembrane region" description="Helical" evidence="1">
    <location>
        <begin position="158"/>
        <end position="178"/>
    </location>
</feature>
<feature type="transmembrane region" description="Helical" evidence="1">
    <location>
        <begin position="207"/>
        <end position="227"/>
    </location>
</feature>
<feature type="transmembrane region" description="Helical" evidence="1">
    <location>
        <begin position="232"/>
        <end position="252"/>
    </location>
</feature>
<feature type="transmembrane region" description="Helical" evidence="1">
    <location>
        <begin position="266"/>
        <end position="286"/>
    </location>
</feature>
<proteinExistence type="inferred from homology"/>
<name>UBIA_BURMA</name>
<accession>Q62H69</accession>
<comment type="function">
    <text evidence="1">Catalyzes the prenylation of para-hydroxybenzoate (PHB) with an all-trans polyprenyl group. Mediates the second step in the final reaction sequence of ubiquinone-8 (UQ-8) biosynthesis, which is the condensation of the polyisoprenoid side chain with PHB, generating the first membrane-bound Q intermediate 3-octaprenyl-4-hydroxybenzoate.</text>
</comment>
<comment type="catalytic activity">
    <reaction evidence="1">
        <text>all-trans-octaprenyl diphosphate + 4-hydroxybenzoate = 4-hydroxy-3-(all-trans-octaprenyl)benzoate + diphosphate</text>
        <dbReference type="Rhea" id="RHEA:27782"/>
        <dbReference type="ChEBI" id="CHEBI:1617"/>
        <dbReference type="ChEBI" id="CHEBI:17879"/>
        <dbReference type="ChEBI" id="CHEBI:33019"/>
        <dbReference type="ChEBI" id="CHEBI:57711"/>
        <dbReference type="EC" id="2.5.1.39"/>
    </reaction>
</comment>
<comment type="cofactor">
    <cofactor evidence="1">
        <name>Mg(2+)</name>
        <dbReference type="ChEBI" id="CHEBI:18420"/>
    </cofactor>
</comment>
<comment type="pathway">
    <text evidence="1">Cofactor biosynthesis; ubiquinone biosynthesis.</text>
</comment>
<comment type="subcellular location">
    <subcellularLocation>
        <location evidence="1">Cell inner membrane</location>
        <topology evidence="1">Multi-pass membrane protein</topology>
    </subcellularLocation>
</comment>
<comment type="similarity">
    <text evidence="1">Belongs to the UbiA prenyltransferase family.</text>
</comment>
<comment type="sequence caution" evidence="2">
    <conflict type="erroneous initiation">
        <sequence resource="EMBL-CDS" id="AAU50177"/>
    </conflict>
</comment>
<reference key="1">
    <citation type="journal article" date="2004" name="Proc. Natl. Acad. Sci. U.S.A.">
        <title>Structural flexibility in the Burkholderia mallei genome.</title>
        <authorList>
            <person name="Nierman W.C."/>
            <person name="DeShazer D."/>
            <person name="Kim H.S."/>
            <person name="Tettelin H."/>
            <person name="Nelson K.E."/>
            <person name="Feldblyum T.V."/>
            <person name="Ulrich R.L."/>
            <person name="Ronning C.M."/>
            <person name="Brinkac L.M."/>
            <person name="Daugherty S.C."/>
            <person name="Davidsen T.D."/>
            <person name="DeBoy R.T."/>
            <person name="Dimitrov G."/>
            <person name="Dodson R.J."/>
            <person name="Durkin A.S."/>
            <person name="Gwinn M.L."/>
            <person name="Haft D.H."/>
            <person name="Khouri H.M."/>
            <person name="Kolonay J.F."/>
            <person name="Madupu R."/>
            <person name="Mohammoud Y."/>
            <person name="Nelson W.C."/>
            <person name="Radune D."/>
            <person name="Romero C.M."/>
            <person name="Sarria S."/>
            <person name="Selengut J."/>
            <person name="Shamblin C."/>
            <person name="Sullivan S.A."/>
            <person name="White O."/>
            <person name="Yu Y."/>
            <person name="Zafar N."/>
            <person name="Zhou L."/>
            <person name="Fraser C.M."/>
        </authorList>
    </citation>
    <scope>NUCLEOTIDE SEQUENCE [LARGE SCALE GENOMIC DNA]</scope>
    <source>
        <strain>ATCC 23344</strain>
    </source>
</reference>
<gene>
    <name evidence="1" type="primary">ubiA</name>
    <name type="ordered locus">BMA2396</name>
</gene>